<dbReference type="EMBL" id="AY137500">
    <property type="protein sequence ID" value="AAN06935.1"/>
    <property type="molecule type" value="Genomic_DNA"/>
</dbReference>
<dbReference type="RefSeq" id="XP_004050475.1">
    <property type="nucleotide sequence ID" value="XM_004050427.2"/>
</dbReference>
<dbReference type="RefSeq" id="XP_004050476.1">
    <property type="nucleotide sequence ID" value="XM_004050428.2"/>
</dbReference>
<dbReference type="RefSeq" id="XP_018891845.1">
    <property type="nucleotide sequence ID" value="XM_019036300.1"/>
</dbReference>
<dbReference type="RefSeq" id="XP_063566949.1">
    <property type="nucleotide sequence ID" value="XM_063710879.1"/>
</dbReference>
<dbReference type="RefSeq" id="XP_063566950.1">
    <property type="nucleotide sequence ID" value="XM_063710880.1"/>
</dbReference>
<dbReference type="BMRB" id="Q6YK33"/>
<dbReference type="SMR" id="Q6YK33"/>
<dbReference type="FunCoup" id="Q6YK33">
    <property type="interactions" value="1261"/>
</dbReference>
<dbReference type="STRING" id="9593.ENSGGOP00000034798"/>
<dbReference type="Ensembl" id="ENSGGOT00000030259.2">
    <property type="protein sequence ID" value="ENSGGOP00000018194.1"/>
    <property type="gene ID" value="ENSGGOG00000022826.2"/>
</dbReference>
<dbReference type="GeneID" id="101132604"/>
<dbReference type="KEGG" id="ggo:101132604"/>
<dbReference type="CTD" id="3630"/>
<dbReference type="eggNOG" id="ENOG502S5P5">
    <property type="taxonomic scope" value="Eukaryota"/>
</dbReference>
<dbReference type="GeneTree" id="ENSGT00390000015440"/>
<dbReference type="HOGENOM" id="CLU_140421_1_0_1"/>
<dbReference type="InParanoid" id="Q6YK33"/>
<dbReference type="OMA" id="LANQHLC"/>
<dbReference type="Proteomes" id="UP000001519">
    <property type="component" value="Chromosome 11"/>
</dbReference>
<dbReference type="Bgee" id="ENSGGOG00000022826">
    <property type="expression patterns" value="Expressed in liver"/>
</dbReference>
<dbReference type="GO" id="GO:0005615">
    <property type="term" value="C:extracellular space"/>
    <property type="evidence" value="ECO:0000318"/>
    <property type="project" value="GO_Central"/>
</dbReference>
<dbReference type="GO" id="GO:0005179">
    <property type="term" value="F:hormone activity"/>
    <property type="evidence" value="ECO:0007669"/>
    <property type="project" value="UniProtKB-KW"/>
</dbReference>
<dbReference type="GO" id="GO:1901701">
    <property type="term" value="P:cellular response to oxygen-containing compound"/>
    <property type="evidence" value="ECO:0007669"/>
    <property type="project" value="UniProtKB-ARBA"/>
</dbReference>
<dbReference type="GO" id="GO:0042593">
    <property type="term" value="P:glucose homeostasis"/>
    <property type="evidence" value="ECO:0000318"/>
    <property type="project" value="GO_Central"/>
</dbReference>
<dbReference type="GO" id="GO:0006006">
    <property type="term" value="P:glucose metabolic process"/>
    <property type="evidence" value="ECO:0007669"/>
    <property type="project" value="UniProtKB-KW"/>
</dbReference>
<dbReference type="GO" id="GO:0050714">
    <property type="term" value="P:positive regulation of protein secretion"/>
    <property type="evidence" value="ECO:0000318"/>
    <property type="project" value="GO_Central"/>
</dbReference>
<dbReference type="CDD" id="cd04367">
    <property type="entry name" value="IlGF_insulin_like"/>
    <property type="match status" value="1"/>
</dbReference>
<dbReference type="FunFam" id="1.10.100.10:FF:000003">
    <property type="entry name" value="Insulin"/>
    <property type="match status" value="1"/>
</dbReference>
<dbReference type="Gene3D" id="1.10.100.10">
    <property type="entry name" value="Insulin-like"/>
    <property type="match status" value="1"/>
</dbReference>
<dbReference type="InterPro" id="IPR004825">
    <property type="entry name" value="Insulin"/>
</dbReference>
<dbReference type="InterPro" id="IPR016179">
    <property type="entry name" value="Insulin-like"/>
</dbReference>
<dbReference type="InterPro" id="IPR036438">
    <property type="entry name" value="Insulin-like_sf"/>
</dbReference>
<dbReference type="InterPro" id="IPR022353">
    <property type="entry name" value="Insulin_CS"/>
</dbReference>
<dbReference type="InterPro" id="IPR022352">
    <property type="entry name" value="Insulin_family"/>
</dbReference>
<dbReference type="PANTHER" id="PTHR11454:SF9">
    <property type="entry name" value="INSULIN"/>
    <property type="match status" value="1"/>
</dbReference>
<dbReference type="PANTHER" id="PTHR11454">
    <property type="entry name" value="INSULIN/INSULIN GROWTH FACTOR"/>
    <property type="match status" value="1"/>
</dbReference>
<dbReference type="Pfam" id="PF00049">
    <property type="entry name" value="Insulin"/>
    <property type="match status" value="1"/>
</dbReference>
<dbReference type="PRINTS" id="PR00277">
    <property type="entry name" value="INSULIN"/>
</dbReference>
<dbReference type="PRINTS" id="PR00276">
    <property type="entry name" value="INSULINFAMLY"/>
</dbReference>
<dbReference type="SMART" id="SM00078">
    <property type="entry name" value="IlGF"/>
    <property type="match status" value="1"/>
</dbReference>
<dbReference type="SUPFAM" id="SSF56994">
    <property type="entry name" value="Insulin-like"/>
    <property type="match status" value="1"/>
</dbReference>
<dbReference type="PROSITE" id="PS00262">
    <property type="entry name" value="INSULIN"/>
    <property type="match status" value="1"/>
</dbReference>
<proteinExistence type="inferred from homology"/>
<organism>
    <name type="scientific">Gorilla gorilla gorilla</name>
    <name type="common">Western lowland gorilla</name>
    <dbReference type="NCBI Taxonomy" id="9595"/>
    <lineage>
        <taxon>Eukaryota</taxon>
        <taxon>Metazoa</taxon>
        <taxon>Chordata</taxon>
        <taxon>Craniata</taxon>
        <taxon>Vertebrata</taxon>
        <taxon>Euteleostomi</taxon>
        <taxon>Mammalia</taxon>
        <taxon>Eutheria</taxon>
        <taxon>Euarchontoglires</taxon>
        <taxon>Primates</taxon>
        <taxon>Haplorrhini</taxon>
        <taxon>Catarrhini</taxon>
        <taxon>Hominidae</taxon>
        <taxon>Gorilla</taxon>
    </lineage>
</organism>
<evidence type="ECO:0000250" key="1"/>
<evidence type="ECO:0000250" key="2">
    <source>
        <dbReference type="UniProtKB" id="P01308"/>
    </source>
</evidence>
<evidence type="ECO:0000305" key="3"/>
<name>INS_GORGO</name>
<comment type="function">
    <text>Insulin decreases blood glucose concentration. It increases cell permeability to monosaccharides, amino acids and fatty acids. It accelerates glycolysis, the pentose phosphate cycle, and glycogen synthesis in liver.</text>
</comment>
<comment type="subunit">
    <text evidence="2">Heterodimer of a B chain and an A chain linked by two disulfide bonds.</text>
</comment>
<comment type="subcellular location">
    <subcellularLocation>
        <location>Secreted</location>
    </subcellularLocation>
</comment>
<comment type="similarity">
    <text evidence="3">Belongs to the insulin family.</text>
</comment>
<keyword id="KW-0119">Carbohydrate metabolism</keyword>
<keyword id="KW-0165">Cleavage on pair of basic residues</keyword>
<keyword id="KW-1015">Disulfide bond</keyword>
<keyword id="KW-0313">Glucose metabolism</keyword>
<keyword id="KW-0372">Hormone</keyword>
<keyword id="KW-1185">Reference proteome</keyword>
<keyword id="KW-0964">Secreted</keyword>
<keyword id="KW-0732">Signal</keyword>
<gene>
    <name type="primary">INS</name>
</gene>
<feature type="signal peptide" evidence="1">
    <location>
        <begin position="1"/>
        <end position="24"/>
    </location>
</feature>
<feature type="peptide" id="PRO_0000015813" description="Insulin B chain">
    <location>
        <begin position="25"/>
        <end position="54"/>
    </location>
</feature>
<feature type="propeptide" id="PRO_0000015814" description="C peptide">
    <location>
        <begin position="57"/>
        <end position="87"/>
    </location>
</feature>
<feature type="peptide" id="PRO_0000015815" description="Insulin A chain">
    <location>
        <begin position="90"/>
        <end position="110"/>
    </location>
</feature>
<feature type="disulfide bond" description="Interchain (between B and A chains)" evidence="2">
    <location>
        <begin position="31"/>
        <end position="96"/>
    </location>
</feature>
<feature type="disulfide bond" description="Interchain (between B and A chains)" evidence="2">
    <location>
        <begin position="43"/>
        <end position="109"/>
    </location>
</feature>
<feature type="disulfide bond" evidence="2">
    <location>
        <begin position="95"/>
        <end position="100"/>
    </location>
</feature>
<protein>
    <recommendedName>
        <fullName>Insulin</fullName>
    </recommendedName>
    <component>
        <recommendedName>
            <fullName>Insulin B chain</fullName>
        </recommendedName>
    </component>
    <component>
        <recommendedName>
            <fullName>Insulin A chain</fullName>
        </recommendedName>
    </component>
</protein>
<accession>Q6YK33</accession>
<sequence length="110" mass="11981">MALWMRLLPLLALLALWGPDPAAAFVNQHLCGSHLVEALYLVCGERGFFYTPKTRREAEDLQVGQVELGGGPGAGSLQPLALEGSLQKRGIVEQCCTSICSLYQLENYCN</sequence>
<reference key="1">
    <citation type="journal article" date="2003" name="Genome Res.">
        <title>Global haplotype diversity in the human insulin gene region.</title>
        <authorList>
            <person name="Stead J.D.H."/>
            <person name="Hurles M.E."/>
            <person name="Jeffreys A.J."/>
        </authorList>
    </citation>
    <scope>NUCLEOTIDE SEQUENCE [GENOMIC DNA]</scope>
</reference>